<keyword id="KW-0963">Cytoplasm</keyword>
<keyword id="KW-0378">Hydrolase</keyword>
<keyword id="KW-0645">Protease</keyword>
<keyword id="KW-0720">Serine protease</keyword>
<proteinExistence type="inferred from homology"/>
<comment type="function">
    <text evidence="1">Cleaves peptides in various proteins in a process that requires ATP hydrolysis. Has a chymotrypsin-like activity. Plays a major role in the degradation of misfolded proteins.</text>
</comment>
<comment type="catalytic activity">
    <reaction evidence="1">
        <text>Hydrolysis of proteins to small peptides in the presence of ATP and magnesium. alpha-casein is the usual test substrate. In the absence of ATP, only oligopeptides shorter than five residues are hydrolyzed (such as succinyl-Leu-Tyr-|-NHMec, and Leu-Tyr-Leu-|-Tyr-Trp, in which cleavage of the -Tyr-|-Leu- and -Tyr-|-Trp bonds also occurs).</text>
        <dbReference type="EC" id="3.4.21.92"/>
    </reaction>
</comment>
<comment type="subunit">
    <text evidence="1">Fourteen ClpP subunits assemble into 2 heptameric rings which stack back to back to give a disk-like structure with a central cavity, resembling the structure of eukaryotic proteasomes.</text>
</comment>
<comment type="subcellular location">
    <subcellularLocation>
        <location evidence="1">Cytoplasm</location>
    </subcellularLocation>
</comment>
<comment type="similarity">
    <text evidence="1">Belongs to the peptidase S14 family.</text>
</comment>
<reference key="1">
    <citation type="journal article" date="2005" name="Genome Res.">
        <title>The Chlamydophila abortus genome sequence reveals an array of variable proteins that contribute to interspecies variation.</title>
        <authorList>
            <person name="Thomson N.R."/>
            <person name="Yeats C."/>
            <person name="Bell K."/>
            <person name="Holden M.T.G."/>
            <person name="Bentley S.D."/>
            <person name="Livingstone M."/>
            <person name="Cerdeno-Tarraga A.-M."/>
            <person name="Harris B."/>
            <person name="Doggett J."/>
            <person name="Ormond D."/>
            <person name="Mungall K."/>
            <person name="Clarke K."/>
            <person name="Feltwell T."/>
            <person name="Hance Z."/>
            <person name="Sanders M."/>
            <person name="Quail M.A."/>
            <person name="Price C."/>
            <person name="Barrell B.G."/>
            <person name="Parkhill J."/>
            <person name="Longbottom D."/>
        </authorList>
    </citation>
    <scope>NUCLEOTIDE SEQUENCE [LARGE SCALE GENOMIC DNA]</scope>
    <source>
        <strain>DSM 27085 / S26/3</strain>
    </source>
</reference>
<protein>
    <recommendedName>
        <fullName evidence="1">ATP-dependent Clp protease proteolytic subunit 2</fullName>
        <ecNumber evidence="1">3.4.21.92</ecNumber>
    </recommendedName>
    <alternativeName>
        <fullName evidence="1">Endopeptidase Clp 2</fullName>
    </alternativeName>
</protein>
<gene>
    <name evidence="1" type="primary">clpP2</name>
    <name type="ordered locus">CAB888</name>
</gene>
<accession>Q5L4W7</accession>
<evidence type="ECO:0000255" key="1">
    <source>
        <dbReference type="HAMAP-Rule" id="MF_00444"/>
    </source>
</evidence>
<organism>
    <name type="scientific">Chlamydia abortus (strain DSM 27085 / S26/3)</name>
    <name type="common">Chlamydophila abortus</name>
    <dbReference type="NCBI Taxonomy" id="218497"/>
    <lineage>
        <taxon>Bacteria</taxon>
        <taxon>Pseudomonadati</taxon>
        <taxon>Chlamydiota</taxon>
        <taxon>Chlamydiia</taxon>
        <taxon>Chlamydiales</taxon>
        <taxon>Chlamydiaceae</taxon>
        <taxon>Chlamydia/Chlamydophila group</taxon>
        <taxon>Chlamydia</taxon>
    </lineage>
</organism>
<sequence length="205" mass="22364">MQMTLVPYVVEDTGRGERAMDIYSRLLKDRIVMIGQEITEPLANTVIAQLLFLMSEDPKKDIKVFINSPGGYITAGLAIYDTIRFLGCDVNTYCIGQAASMGALLLSAGTKGKRYALPHSRMMIHQPSGGIIGTSADIQLQAAEILTLKKHLANILSECTGQPVEKIIEDSERDFFMGAEDAISYGLIDKVVSSAKDTKDKDTIS</sequence>
<name>CLPP2_CHLAB</name>
<feature type="chain" id="PRO_0000226438" description="ATP-dependent Clp protease proteolytic subunit 2">
    <location>
        <begin position="1"/>
        <end position="205"/>
    </location>
</feature>
<feature type="active site" description="Nucleophile" evidence="1">
    <location>
        <position position="100"/>
    </location>
</feature>
<feature type="active site" evidence="1">
    <location>
        <position position="125"/>
    </location>
</feature>
<dbReference type="EC" id="3.4.21.92" evidence="1"/>
<dbReference type="EMBL" id="CR848038">
    <property type="protein sequence ID" value="CAH64328.1"/>
    <property type="molecule type" value="Genomic_DNA"/>
</dbReference>
<dbReference type="SMR" id="Q5L4W7"/>
<dbReference type="MEROPS" id="S14.001"/>
<dbReference type="KEGG" id="cab:CAB888"/>
<dbReference type="eggNOG" id="COG0740">
    <property type="taxonomic scope" value="Bacteria"/>
</dbReference>
<dbReference type="HOGENOM" id="CLU_058707_3_2_0"/>
<dbReference type="Proteomes" id="UP000001012">
    <property type="component" value="Chromosome"/>
</dbReference>
<dbReference type="GO" id="GO:0005737">
    <property type="term" value="C:cytoplasm"/>
    <property type="evidence" value="ECO:0007669"/>
    <property type="project" value="UniProtKB-SubCell"/>
</dbReference>
<dbReference type="GO" id="GO:0009368">
    <property type="term" value="C:endopeptidase Clp complex"/>
    <property type="evidence" value="ECO:0007669"/>
    <property type="project" value="TreeGrafter"/>
</dbReference>
<dbReference type="GO" id="GO:0004176">
    <property type="term" value="F:ATP-dependent peptidase activity"/>
    <property type="evidence" value="ECO:0007669"/>
    <property type="project" value="InterPro"/>
</dbReference>
<dbReference type="GO" id="GO:0051117">
    <property type="term" value="F:ATPase binding"/>
    <property type="evidence" value="ECO:0007669"/>
    <property type="project" value="TreeGrafter"/>
</dbReference>
<dbReference type="GO" id="GO:0004252">
    <property type="term" value="F:serine-type endopeptidase activity"/>
    <property type="evidence" value="ECO:0007669"/>
    <property type="project" value="UniProtKB-UniRule"/>
</dbReference>
<dbReference type="GO" id="GO:0006515">
    <property type="term" value="P:protein quality control for misfolded or incompletely synthesized proteins"/>
    <property type="evidence" value="ECO:0007669"/>
    <property type="project" value="TreeGrafter"/>
</dbReference>
<dbReference type="CDD" id="cd07017">
    <property type="entry name" value="S14_ClpP_2"/>
    <property type="match status" value="1"/>
</dbReference>
<dbReference type="FunFam" id="3.90.226.10:FF:000001">
    <property type="entry name" value="ATP-dependent Clp protease proteolytic subunit"/>
    <property type="match status" value="1"/>
</dbReference>
<dbReference type="Gene3D" id="3.90.226.10">
    <property type="entry name" value="2-enoyl-CoA Hydratase, Chain A, domain 1"/>
    <property type="match status" value="1"/>
</dbReference>
<dbReference type="HAMAP" id="MF_00444">
    <property type="entry name" value="ClpP"/>
    <property type="match status" value="1"/>
</dbReference>
<dbReference type="InterPro" id="IPR001907">
    <property type="entry name" value="ClpP"/>
</dbReference>
<dbReference type="InterPro" id="IPR029045">
    <property type="entry name" value="ClpP/crotonase-like_dom_sf"/>
</dbReference>
<dbReference type="InterPro" id="IPR023562">
    <property type="entry name" value="ClpP/TepA"/>
</dbReference>
<dbReference type="InterPro" id="IPR033135">
    <property type="entry name" value="ClpP_His_AS"/>
</dbReference>
<dbReference type="InterPro" id="IPR018215">
    <property type="entry name" value="ClpP_Ser_AS"/>
</dbReference>
<dbReference type="NCBIfam" id="NF001368">
    <property type="entry name" value="PRK00277.1"/>
    <property type="match status" value="1"/>
</dbReference>
<dbReference type="NCBIfam" id="NF009205">
    <property type="entry name" value="PRK12553.1"/>
    <property type="match status" value="1"/>
</dbReference>
<dbReference type="PANTHER" id="PTHR10381">
    <property type="entry name" value="ATP-DEPENDENT CLP PROTEASE PROTEOLYTIC SUBUNIT"/>
    <property type="match status" value="1"/>
</dbReference>
<dbReference type="PANTHER" id="PTHR10381:SF70">
    <property type="entry name" value="ATP-DEPENDENT CLP PROTEASE PROTEOLYTIC SUBUNIT"/>
    <property type="match status" value="1"/>
</dbReference>
<dbReference type="Pfam" id="PF00574">
    <property type="entry name" value="CLP_protease"/>
    <property type="match status" value="1"/>
</dbReference>
<dbReference type="PRINTS" id="PR00127">
    <property type="entry name" value="CLPPROTEASEP"/>
</dbReference>
<dbReference type="SUPFAM" id="SSF52096">
    <property type="entry name" value="ClpP/crotonase"/>
    <property type="match status" value="1"/>
</dbReference>
<dbReference type="PROSITE" id="PS00382">
    <property type="entry name" value="CLP_PROTEASE_HIS"/>
    <property type="match status" value="1"/>
</dbReference>
<dbReference type="PROSITE" id="PS00381">
    <property type="entry name" value="CLP_PROTEASE_SER"/>
    <property type="match status" value="1"/>
</dbReference>